<reference key="1">
    <citation type="submission" date="2005-03" db="EMBL/GenBank/DDBJ databases">
        <title>Complete structure of the chloroplast genome of Populus alba.</title>
        <authorList>
            <person name="Okumura S."/>
            <person name="Yamashita A."/>
            <person name="Kanamoto H."/>
            <person name="Hattori M."/>
            <person name="Takase H."/>
            <person name="Tomizawa K."/>
        </authorList>
    </citation>
    <scope>NUCLEOTIDE SEQUENCE [LARGE SCALE GENOMIC DNA]</scope>
</reference>
<feature type="chain" id="PRO_0000362868" description="NAD(P)H-quinone oxidoreductase subunit 3, chloroplastic">
    <location>
        <begin position="1"/>
        <end position="120"/>
    </location>
</feature>
<feature type="transmembrane region" description="Helical" evidence="1">
    <location>
        <begin position="9"/>
        <end position="29"/>
    </location>
</feature>
<feature type="transmembrane region" description="Helical" evidence="1">
    <location>
        <begin position="64"/>
        <end position="84"/>
    </location>
</feature>
<feature type="transmembrane region" description="Helical" evidence="1">
    <location>
        <begin position="88"/>
        <end position="108"/>
    </location>
</feature>
<sequence>MFLLYEYDIFWAFLIISSVIPILAFLISGLLSPIRKGPEKLSSYESGIEPMGDAWLQFRIRYYMFALVFVVFDVETVFLYPWAMSFDVLGVSVFIEALIFVLILIVGLVYAWRKGALEWS</sequence>
<dbReference type="EC" id="7.1.1.-" evidence="1"/>
<dbReference type="EMBL" id="AP008956">
    <property type="protein sequence ID" value="BAE97210.1"/>
    <property type="molecule type" value="Genomic_DNA"/>
</dbReference>
<dbReference type="RefSeq" id="YP_665563.1">
    <property type="nucleotide sequence ID" value="NC_008235.1"/>
</dbReference>
<dbReference type="SMR" id="Q14FF2"/>
<dbReference type="GeneID" id="4178229"/>
<dbReference type="KEGG" id="palz:4178229"/>
<dbReference type="OrthoDB" id="9335at3646"/>
<dbReference type="GO" id="GO:0009535">
    <property type="term" value="C:chloroplast thylakoid membrane"/>
    <property type="evidence" value="ECO:0007669"/>
    <property type="project" value="UniProtKB-SubCell"/>
</dbReference>
<dbReference type="GO" id="GO:0030964">
    <property type="term" value="C:NADH dehydrogenase complex"/>
    <property type="evidence" value="ECO:0007669"/>
    <property type="project" value="TreeGrafter"/>
</dbReference>
<dbReference type="GO" id="GO:0008137">
    <property type="term" value="F:NADH dehydrogenase (ubiquinone) activity"/>
    <property type="evidence" value="ECO:0007669"/>
    <property type="project" value="InterPro"/>
</dbReference>
<dbReference type="GO" id="GO:0048038">
    <property type="term" value="F:quinone binding"/>
    <property type="evidence" value="ECO:0007669"/>
    <property type="project" value="UniProtKB-KW"/>
</dbReference>
<dbReference type="GO" id="GO:0019684">
    <property type="term" value="P:photosynthesis, light reaction"/>
    <property type="evidence" value="ECO:0007669"/>
    <property type="project" value="UniProtKB-UniRule"/>
</dbReference>
<dbReference type="FunFam" id="1.20.58.1610:FF:000001">
    <property type="entry name" value="NAD(P)H-quinone oxidoreductase subunit 3, chloroplastic"/>
    <property type="match status" value="1"/>
</dbReference>
<dbReference type="Gene3D" id="1.20.58.1610">
    <property type="entry name" value="NADH:ubiquinone/plastoquinone oxidoreductase, chain 3"/>
    <property type="match status" value="1"/>
</dbReference>
<dbReference type="HAMAP" id="MF_01394">
    <property type="entry name" value="NDH1_NuoA"/>
    <property type="match status" value="1"/>
</dbReference>
<dbReference type="InterPro" id="IPR023043">
    <property type="entry name" value="NAD(P)H_OxRDtase_bac/plastid"/>
</dbReference>
<dbReference type="InterPro" id="IPR000440">
    <property type="entry name" value="NADH_UbQ/plastoQ_OxRdtase_su3"/>
</dbReference>
<dbReference type="InterPro" id="IPR038430">
    <property type="entry name" value="NDAH_ubi_oxred_su3_sf"/>
</dbReference>
<dbReference type="PANTHER" id="PTHR11058">
    <property type="entry name" value="NADH-UBIQUINONE OXIDOREDUCTASE CHAIN 3"/>
    <property type="match status" value="1"/>
</dbReference>
<dbReference type="PANTHER" id="PTHR11058:SF9">
    <property type="entry name" value="NADH-UBIQUINONE OXIDOREDUCTASE CHAIN 3"/>
    <property type="match status" value="1"/>
</dbReference>
<dbReference type="Pfam" id="PF00507">
    <property type="entry name" value="Oxidored_q4"/>
    <property type="match status" value="1"/>
</dbReference>
<keyword id="KW-0150">Chloroplast</keyword>
<keyword id="KW-0472">Membrane</keyword>
<keyword id="KW-0520">NAD</keyword>
<keyword id="KW-0521">NADP</keyword>
<keyword id="KW-0934">Plastid</keyword>
<keyword id="KW-0618">Plastoquinone</keyword>
<keyword id="KW-0874">Quinone</keyword>
<keyword id="KW-0793">Thylakoid</keyword>
<keyword id="KW-1278">Translocase</keyword>
<keyword id="KW-0812">Transmembrane</keyword>
<keyword id="KW-1133">Transmembrane helix</keyword>
<keyword id="KW-0813">Transport</keyword>
<name>NU3C_POPAL</name>
<geneLocation type="chloroplast"/>
<organism>
    <name type="scientific">Populus alba</name>
    <name type="common">White poplar</name>
    <dbReference type="NCBI Taxonomy" id="43335"/>
    <lineage>
        <taxon>Eukaryota</taxon>
        <taxon>Viridiplantae</taxon>
        <taxon>Streptophyta</taxon>
        <taxon>Embryophyta</taxon>
        <taxon>Tracheophyta</taxon>
        <taxon>Spermatophyta</taxon>
        <taxon>Magnoliopsida</taxon>
        <taxon>eudicotyledons</taxon>
        <taxon>Gunneridae</taxon>
        <taxon>Pentapetalae</taxon>
        <taxon>rosids</taxon>
        <taxon>fabids</taxon>
        <taxon>Malpighiales</taxon>
        <taxon>Salicaceae</taxon>
        <taxon>Saliceae</taxon>
        <taxon>Populus</taxon>
    </lineage>
</organism>
<comment type="function">
    <text evidence="1">NDH shuttles electrons from NAD(P)H:plastoquinone, via FMN and iron-sulfur (Fe-S) centers, to quinones in the photosynthetic chain and possibly in a chloroplast respiratory chain. The immediate electron acceptor for the enzyme in this species is believed to be plastoquinone. Couples the redox reaction to proton translocation, and thus conserves the redox energy in a proton gradient.</text>
</comment>
<comment type="catalytic activity">
    <reaction evidence="1">
        <text>a plastoquinone + NADH + (n+1) H(+)(in) = a plastoquinol + NAD(+) + n H(+)(out)</text>
        <dbReference type="Rhea" id="RHEA:42608"/>
        <dbReference type="Rhea" id="RHEA-COMP:9561"/>
        <dbReference type="Rhea" id="RHEA-COMP:9562"/>
        <dbReference type="ChEBI" id="CHEBI:15378"/>
        <dbReference type="ChEBI" id="CHEBI:17757"/>
        <dbReference type="ChEBI" id="CHEBI:57540"/>
        <dbReference type="ChEBI" id="CHEBI:57945"/>
        <dbReference type="ChEBI" id="CHEBI:62192"/>
    </reaction>
</comment>
<comment type="catalytic activity">
    <reaction evidence="1">
        <text>a plastoquinone + NADPH + (n+1) H(+)(in) = a plastoquinol + NADP(+) + n H(+)(out)</text>
        <dbReference type="Rhea" id="RHEA:42612"/>
        <dbReference type="Rhea" id="RHEA-COMP:9561"/>
        <dbReference type="Rhea" id="RHEA-COMP:9562"/>
        <dbReference type="ChEBI" id="CHEBI:15378"/>
        <dbReference type="ChEBI" id="CHEBI:17757"/>
        <dbReference type="ChEBI" id="CHEBI:57783"/>
        <dbReference type="ChEBI" id="CHEBI:58349"/>
        <dbReference type="ChEBI" id="CHEBI:62192"/>
    </reaction>
</comment>
<comment type="subunit">
    <text evidence="1">NDH is composed of at least 16 different subunits, 5 of which are encoded in the nucleus.</text>
</comment>
<comment type="subcellular location">
    <subcellularLocation>
        <location evidence="1">Plastid</location>
        <location evidence="1">Chloroplast thylakoid membrane</location>
        <topology evidence="1">Multi-pass membrane protein</topology>
    </subcellularLocation>
</comment>
<comment type="similarity">
    <text evidence="1">Belongs to the complex I subunit 3 family.</text>
</comment>
<gene>
    <name evidence="1" type="primary">ndhC</name>
</gene>
<proteinExistence type="inferred from homology"/>
<accession>Q14FF2</accession>
<evidence type="ECO:0000255" key="1">
    <source>
        <dbReference type="HAMAP-Rule" id="MF_01394"/>
    </source>
</evidence>
<protein>
    <recommendedName>
        <fullName evidence="1">NAD(P)H-quinone oxidoreductase subunit 3, chloroplastic</fullName>
        <ecNumber evidence="1">7.1.1.-</ecNumber>
    </recommendedName>
    <alternativeName>
        <fullName evidence="1">NAD(P)H dehydrogenase subunit 3</fullName>
    </alternativeName>
    <alternativeName>
        <fullName evidence="1">NADH-plastoquinone oxidoreductase subunit 3</fullName>
    </alternativeName>
</protein>